<dbReference type="EC" id="2.5.1.-" evidence="1"/>
<dbReference type="EMBL" id="CP000826">
    <property type="protein sequence ID" value="ABV41888.1"/>
    <property type="molecule type" value="Genomic_DNA"/>
</dbReference>
<dbReference type="SMR" id="A8GFJ8"/>
<dbReference type="STRING" id="399741.Spro_2787"/>
<dbReference type="KEGG" id="spe:Spro_2787"/>
<dbReference type="eggNOG" id="COG0500">
    <property type="taxonomic scope" value="Bacteria"/>
</dbReference>
<dbReference type="HOGENOM" id="CLU_052665_0_0_6"/>
<dbReference type="OrthoDB" id="9773188at2"/>
<dbReference type="GO" id="GO:0008168">
    <property type="term" value="F:methyltransferase activity"/>
    <property type="evidence" value="ECO:0007669"/>
    <property type="project" value="TreeGrafter"/>
</dbReference>
<dbReference type="GO" id="GO:0016765">
    <property type="term" value="F:transferase activity, transferring alkyl or aryl (other than methyl) groups"/>
    <property type="evidence" value="ECO:0007669"/>
    <property type="project" value="UniProtKB-UniRule"/>
</dbReference>
<dbReference type="GO" id="GO:0002098">
    <property type="term" value="P:tRNA wobble uridine modification"/>
    <property type="evidence" value="ECO:0007669"/>
    <property type="project" value="InterPro"/>
</dbReference>
<dbReference type="CDD" id="cd02440">
    <property type="entry name" value="AdoMet_MTases"/>
    <property type="match status" value="1"/>
</dbReference>
<dbReference type="Gene3D" id="3.40.50.150">
    <property type="entry name" value="Vaccinia Virus protein VP39"/>
    <property type="match status" value="1"/>
</dbReference>
<dbReference type="HAMAP" id="MF_01590">
    <property type="entry name" value="tRNA_carboxymethyltr_CmoB"/>
    <property type="match status" value="1"/>
</dbReference>
<dbReference type="InterPro" id="IPR010017">
    <property type="entry name" value="CmoB"/>
</dbReference>
<dbReference type="InterPro" id="IPR027555">
    <property type="entry name" value="Mo5U34_MeTrfas-like"/>
</dbReference>
<dbReference type="InterPro" id="IPR029063">
    <property type="entry name" value="SAM-dependent_MTases_sf"/>
</dbReference>
<dbReference type="NCBIfam" id="NF011650">
    <property type="entry name" value="PRK15068.1"/>
    <property type="match status" value="1"/>
</dbReference>
<dbReference type="NCBIfam" id="TIGR00452">
    <property type="entry name" value="tRNA 5-methoxyuridine(34)/uridine 5-oxyacetic acid(34) synthase CmoB"/>
    <property type="match status" value="1"/>
</dbReference>
<dbReference type="PANTHER" id="PTHR43464">
    <property type="entry name" value="METHYLTRANSFERASE"/>
    <property type="match status" value="1"/>
</dbReference>
<dbReference type="PANTHER" id="PTHR43464:SF95">
    <property type="entry name" value="TRNA U34 CARBOXYMETHYLTRANSFERASE"/>
    <property type="match status" value="1"/>
</dbReference>
<dbReference type="Pfam" id="PF08003">
    <property type="entry name" value="Methyltransf_9"/>
    <property type="match status" value="1"/>
</dbReference>
<dbReference type="SUPFAM" id="SSF53335">
    <property type="entry name" value="S-adenosyl-L-methionine-dependent methyltransferases"/>
    <property type="match status" value="1"/>
</dbReference>
<keyword id="KW-0808">Transferase</keyword>
<keyword id="KW-0819">tRNA processing</keyword>
<reference key="1">
    <citation type="submission" date="2007-09" db="EMBL/GenBank/DDBJ databases">
        <title>Complete sequence of chromosome of Serratia proteamaculans 568.</title>
        <authorList>
            <consortium name="US DOE Joint Genome Institute"/>
            <person name="Copeland A."/>
            <person name="Lucas S."/>
            <person name="Lapidus A."/>
            <person name="Barry K."/>
            <person name="Glavina del Rio T."/>
            <person name="Dalin E."/>
            <person name="Tice H."/>
            <person name="Pitluck S."/>
            <person name="Chain P."/>
            <person name="Malfatti S."/>
            <person name="Shin M."/>
            <person name="Vergez L."/>
            <person name="Schmutz J."/>
            <person name="Larimer F."/>
            <person name="Land M."/>
            <person name="Hauser L."/>
            <person name="Kyrpides N."/>
            <person name="Kim E."/>
            <person name="Taghavi S."/>
            <person name="Newman L."/>
            <person name="Vangronsveld J."/>
            <person name="van der Lelie D."/>
            <person name="Richardson P."/>
        </authorList>
    </citation>
    <scope>NUCLEOTIDE SEQUENCE [LARGE SCALE GENOMIC DNA]</scope>
    <source>
        <strain>568</strain>
    </source>
</reference>
<comment type="function">
    <text evidence="1">Catalyzes carboxymethyl transfer from carboxy-S-adenosyl-L-methionine (Cx-SAM) to 5-hydroxyuridine (ho5U) to form 5-carboxymethoxyuridine (cmo5U) at position 34 in tRNAs.</text>
</comment>
<comment type="catalytic activity">
    <reaction evidence="1">
        <text>carboxy-S-adenosyl-L-methionine + 5-hydroxyuridine(34) in tRNA = 5-carboxymethoxyuridine(34) in tRNA + S-adenosyl-L-homocysteine + H(+)</text>
        <dbReference type="Rhea" id="RHEA:52848"/>
        <dbReference type="Rhea" id="RHEA-COMP:13381"/>
        <dbReference type="Rhea" id="RHEA-COMP:13383"/>
        <dbReference type="ChEBI" id="CHEBI:15378"/>
        <dbReference type="ChEBI" id="CHEBI:57856"/>
        <dbReference type="ChEBI" id="CHEBI:134278"/>
        <dbReference type="ChEBI" id="CHEBI:136877"/>
        <dbReference type="ChEBI" id="CHEBI:136879"/>
    </reaction>
</comment>
<comment type="subunit">
    <text evidence="1">Homotetramer.</text>
</comment>
<comment type="similarity">
    <text evidence="1">Belongs to the class I-like SAM-binding methyltransferase superfamily. CmoB family.</text>
</comment>
<name>CMOB_SERP5</name>
<evidence type="ECO:0000255" key="1">
    <source>
        <dbReference type="HAMAP-Rule" id="MF_01590"/>
    </source>
</evidence>
<gene>
    <name evidence="1" type="primary">cmoB</name>
    <name type="ordered locus">Spro_2787</name>
</gene>
<protein>
    <recommendedName>
        <fullName evidence="1">tRNA U34 carboxymethyltransferase</fullName>
        <ecNumber evidence="1">2.5.1.-</ecNumber>
    </recommendedName>
</protein>
<feature type="chain" id="PRO_1000069333" description="tRNA U34 carboxymethyltransferase">
    <location>
        <begin position="1"/>
        <end position="323"/>
    </location>
</feature>
<feature type="binding site" evidence="1">
    <location>
        <position position="91"/>
    </location>
    <ligand>
        <name>carboxy-S-adenosyl-L-methionine</name>
        <dbReference type="ChEBI" id="CHEBI:134278"/>
    </ligand>
</feature>
<feature type="binding site" evidence="1">
    <location>
        <position position="105"/>
    </location>
    <ligand>
        <name>carboxy-S-adenosyl-L-methionine</name>
        <dbReference type="ChEBI" id="CHEBI:134278"/>
    </ligand>
</feature>
<feature type="binding site" evidence="1">
    <location>
        <position position="110"/>
    </location>
    <ligand>
        <name>carboxy-S-adenosyl-L-methionine</name>
        <dbReference type="ChEBI" id="CHEBI:134278"/>
    </ligand>
</feature>
<feature type="binding site" evidence="1">
    <location>
        <position position="130"/>
    </location>
    <ligand>
        <name>carboxy-S-adenosyl-L-methionine</name>
        <dbReference type="ChEBI" id="CHEBI:134278"/>
    </ligand>
</feature>
<feature type="binding site" evidence="1">
    <location>
        <begin position="181"/>
        <end position="182"/>
    </location>
    <ligand>
        <name>carboxy-S-adenosyl-L-methionine</name>
        <dbReference type="ChEBI" id="CHEBI:134278"/>
    </ligand>
</feature>
<feature type="binding site" evidence="1">
    <location>
        <position position="196"/>
    </location>
    <ligand>
        <name>carboxy-S-adenosyl-L-methionine</name>
        <dbReference type="ChEBI" id="CHEBI:134278"/>
    </ligand>
</feature>
<feature type="binding site" evidence="1">
    <location>
        <position position="200"/>
    </location>
    <ligand>
        <name>carboxy-S-adenosyl-L-methionine</name>
        <dbReference type="ChEBI" id="CHEBI:134278"/>
    </ligand>
</feature>
<feature type="binding site" evidence="1">
    <location>
        <position position="315"/>
    </location>
    <ligand>
        <name>carboxy-S-adenosyl-L-methionine</name>
        <dbReference type="ChEBI" id="CHEBI:134278"/>
    </ligand>
</feature>
<organism>
    <name type="scientific">Serratia proteamaculans (strain 568)</name>
    <dbReference type="NCBI Taxonomy" id="399741"/>
    <lineage>
        <taxon>Bacteria</taxon>
        <taxon>Pseudomonadati</taxon>
        <taxon>Pseudomonadota</taxon>
        <taxon>Gammaproteobacteria</taxon>
        <taxon>Enterobacterales</taxon>
        <taxon>Yersiniaceae</taxon>
        <taxon>Serratia</taxon>
    </lineage>
</organism>
<accession>A8GFJ8</accession>
<sequence>MIEFGDFYQRIAKGNLSHWLDTLPAQLSAWQRESLHGKFKQWFNSVEHLPALTPTRLDLLNGVRAEMDTPLSPGQLEGIEKMLRTMMPWRKGPFSLYGIDIDTEWHSDWKWDRVLPHISPLAGRTILDVGCGSGYHLWRMLGAGAQLAVGIDPMQLFLCQFEAVRKLLGGDQRAHLLPLGIEQLPELAAFDTVFSMGVLYHRRSPLDHLYQLKNQLVSEGELVLETLVIEGDRNQVLVPGDRYAQMRNVYFIPSAEALKCWLEKCGFVDVKIADMCVTSTEEQRRTDWMTSESLAEFLDPNDPGKTIEGYPSPLRAVLVARKP</sequence>
<proteinExistence type="inferred from homology"/>